<gene>
    <name evidence="1" type="primary">rplR</name>
    <name type="ordered locus">VC_2580</name>
</gene>
<evidence type="ECO:0000255" key="1">
    <source>
        <dbReference type="HAMAP-Rule" id="MF_01337"/>
    </source>
</evidence>
<evidence type="ECO:0000305" key="2"/>
<comment type="function">
    <text evidence="1">This is one of the proteins that bind and probably mediate the attachment of the 5S RNA into the large ribosomal subunit, where it forms part of the central protuberance.</text>
</comment>
<comment type="subunit">
    <text evidence="1">Part of the 50S ribosomal subunit; part of the 5S rRNA/L5/L18/L25 subcomplex. Contacts the 5S and 23S rRNAs.</text>
</comment>
<comment type="similarity">
    <text evidence="1">Belongs to the universal ribosomal protein uL18 family.</text>
</comment>
<organism>
    <name type="scientific">Vibrio cholerae serotype O1 (strain ATCC 39315 / El Tor Inaba N16961)</name>
    <dbReference type="NCBI Taxonomy" id="243277"/>
    <lineage>
        <taxon>Bacteria</taxon>
        <taxon>Pseudomonadati</taxon>
        <taxon>Pseudomonadota</taxon>
        <taxon>Gammaproteobacteria</taxon>
        <taxon>Vibrionales</taxon>
        <taxon>Vibrionaceae</taxon>
        <taxon>Vibrio</taxon>
    </lineage>
</organism>
<dbReference type="EMBL" id="AE003852">
    <property type="protein sequence ID" value="AAF95721.1"/>
    <property type="molecule type" value="Genomic_DNA"/>
</dbReference>
<dbReference type="PIR" id="F82057">
    <property type="entry name" value="F82057"/>
</dbReference>
<dbReference type="RefSeq" id="NP_232208.1">
    <property type="nucleotide sequence ID" value="NC_002505.1"/>
</dbReference>
<dbReference type="RefSeq" id="WP_000358092.1">
    <property type="nucleotide sequence ID" value="NZ_LT906614.1"/>
</dbReference>
<dbReference type="SMR" id="Q9KP00"/>
<dbReference type="STRING" id="243277.VC_2580"/>
<dbReference type="DNASU" id="2615597"/>
<dbReference type="EnsemblBacteria" id="AAF95721">
    <property type="protein sequence ID" value="AAF95721"/>
    <property type="gene ID" value="VC_2580"/>
</dbReference>
<dbReference type="GeneID" id="94012768"/>
<dbReference type="KEGG" id="vch:VC_2580"/>
<dbReference type="PATRIC" id="fig|243277.26.peg.2459"/>
<dbReference type="eggNOG" id="COG0256">
    <property type="taxonomic scope" value="Bacteria"/>
</dbReference>
<dbReference type="HOGENOM" id="CLU_098841_0_1_6"/>
<dbReference type="Proteomes" id="UP000000584">
    <property type="component" value="Chromosome 1"/>
</dbReference>
<dbReference type="GO" id="GO:0022625">
    <property type="term" value="C:cytosolic large ribosomal subunit"/>
    <property type="evidence" value="ECO:0000318"/>
    <property type="project" value="GO_Central"/>
</dbReference>
<dbReference type="GO" id="GO:0008097">
    <property type="term" value="F:5S rRNA binding"/>
    <property type="evidence" value="ECO:0000318"/>
    <property type="project" value="GO_Central"/>
</dbReference>
<dbReference type="GO" id="GO:0003735">
    <property type="term" value="F:structural constituent of ribosome"/>
    <property type="evidence" value="ECO:0007669"/>
    <property type="project" value="InterPro"/>
</dbReference>
<dbReference type="GO" id="GO:0006412">
    <property type="term" value="P:translation"/>
    <property type="evidence" value="ECO:0007669"/>
    <property type="project" value="UniProtKB-UniRule"/>
</dbReference>
<dbReference type="CDD" id="cd00432">
    <property type="entry name" value="Ribosomal_L18_L5e"/>
    <property type="match status" value="1"/>
</dbReference>
<dbReference type="FunFam" id="3.30.420.100:FF:000001">
    <property type="entry name" value="50S ribosomal protein L18"/>
    <property type="match status" value="1"/>
</dbReference>
<dbReference type="Gene3D" id="3.30.420.100">
    <property type="match status" value="1"/>
</dbReference>
<dbReference type="HAMAP" id="MF_01337_B">
    <property type="entry name" value="Ribosomal_uL18_B"/>
    <property type="match status" value="1"/>
</dbReference>
<dbReference type="InterPro" id="IPR004389">
    <property type="entry name" value="Ribosomal_uL18_bac-type"/>
</dbReference>
<dbReference type="InterPro" id="IPR005484">
    <property type="entry name" value="Ribosomal_uL18_bac/euk"/>
</dbReference>
<dbReference type="NCBIfam" id="TIGR00060">
    <property type="entry name" value="L18_bact"/>
    <property type="match status" value="1"/>
</dbReference>
<dbReference type="PANTHER" id="PTHR12899">
    <property type="entry name" value="39S RIBOSOMAL PROTEIN L18, MITOCHONDRIAL"/>
    <property type="match status" value="1"/>
</dbReference>
<dbReference type="PANTHER" id="PTHR12899:SF3">
    <property type="entry name" value="LARGE RIBOSOMAL SUBUNIT PROTEIN UL18M"/>
    <property type="match status" value="1"/>
</dbReference>
<dbReference type="Pfam" id="PF00861">
    <property type="entry name" value="Ribosomal_L18p"/>
    <property type="match status" value="1"/>
</dbReference>
<dbReference type="SUPFAM" id="SSF53137">
    <property type="entry name" value="Translational machinery components"/>
    <property type="match status" value="1"/>
</dbReference>
<accession>Q9KP00</accession>
<feature type="chain" id="PRO_0000131380" description="Large ribosomal subunit protein uL18">
    <location>
        <begin position="1"/>
        <end position="117"/>
    </location>
</feature>
<reference key="1">
    <citation type="journal article" date="2000" name="Nature">
        <title>DNA sequence of both chromosomes of the cholera pathogen Vibrio cholerae.</title>
        <authorList>
            <person name="Heidelberg J.F."/>
            <person name="Eisen J.A."/>
            <person name="Nelson W.C."/>
            <person name="Clayton R.A."/>
            <person name="Gwinn M.L."/>
            <person name="Dodson R.J."/>
            <person name="Haft D.H."/>
            <person name="Hickey E.K."/>
            <person name="Peterson J.D."/>
            <person name="Umayam L.A."/>
            <person name="Gill S.R."/>
            <person name="Nelson K.E."/>
            <person name="Read T.D."/>
            <person name="Tettelin H."/>
            <person name="Richardson D.L."/>
            <person name="Ermolaeva M.D."/>
            <person name="Vamathevan J.J."/>
            <person name="Bass S."/>
            <person name="Qin H."/>
            <person name="Dragoi I."/>
            <person name="Sellers P."/>
            <person name="McDonald L.A."/>
            <person name="Utterback T.R."/>
            <person name="Fleischmann R.D."/>
            <person name="Nierman W.C."/>
            <person name="White O."/>
            <person name="Salzberg S.L."/>
            <person name="Smith H.O."/>
            <person name="Colwell R.R."/>
            <person name="Mekalanos J.J."/>
            <person name="Venter J.C."/>
            <person name="Fraser C.M."/>
        </authorList>
    </citation>
    <scope>NUCLEOTIDE SEQUENCE [LARGE SCALE GENOMIC DNA]</scope>
    <source>
        <strain>ATCC 39315 / El Tor Inaba N16961</strain>
    </source>
</reference>
<keyword id="KW-1185">Reference proteome</keyword>
<keyword id="KW-0687">Ribonucleoprotein</keyword>
<keyword id="KW-0689">Ribosomal protein</keyword>
<keyword id="KW-0694">RNA-binding</keyword>
<keyword id="KW-0699">rRNA-binding</keyword>
<proteinExistence type="inferred from homology"/>
<name>RL18_VIBCH</name>
<sequence length="117" mass="12644">MDKKASRIRRATRARRKIAELGATRLVVHRTPRHVYAQVIAANGSEVIAAASTVEKAIREQVKYTGNIDAAKAVGKAVAERALEKGVTVVAFDRSGFQYHGRVAALADSAREAGLKF</sequence>
<protein>
    <recommendedName>
        <fullName evidence="1">Large ribosomal subunit protein uL18</fullName>
    </recommendedName>
    <alternativeName>
        <fullName evidence="2">50S ribosomal protein L18</fullName>
    </alternativeName>
</protein>